<accession>P46211</accession>
<organism>
    <name type="scientific">Aquifex pyrophilus</name>
    <dbReference type="NCBI Taxonomy" id="2714"/>
    <lineage>
        <taxon>Bacteria</taxon>
        <taxon>Pseudomonadati</taxon>
        <taxon>Aquificota</taxon>
        <taxon>Aquificia</taxon>
        <taxon>Aquificales</taxon>
        <taxon>Aquificaceae</taxon>
        <taxon>Aquifex</taxon>
    </lineage>
</organism>
<protein>
    <recommendedName>
        <fullName>Elongation factor G</fullName>
        <shortName>EF-G</shortName>
    </recommendedName>
</protein>
<evidence type="ECO:0000250" key="1"/>
<evidence type="ECO:0000305" key="2"/>
<name>EFG_AQUPY</name>
<feature type="chain" id="PRO_0000091059" description="Elongation factor G">
    <location>
        <begin position="1"/>
        <end position="699"/>
    </location>
</feature>
<feature type="domain" description="tr-type G">
    <location>
        <begin position="8"/>
        <end position="286"/>
    </location>
</feature>
<feature type="binding site" evidence="1">
    <location>
        <begin position="17"/>
        <end position="24"/>
    </location>
    <ligand>
        <name>GTP</name>
        <dbReference type="ChEBI" id="CHEBI:37565"/>
    </ligand>
</feature>
<feature type="binding site" evidence="1">
    <location>
        <begin position="84"/>
        <end position="88"/>
    </location>
    <ligand>
        <name>GTP</name>
        <dbReference type="ChEBI" id="CHEBI:37565"/>
    </ligand>
</feature>
<feature type="binding site" evidence="1">
    <location>
        <begin position="138"/>
        <end position="141"/>
    </location>
    <ligand>
        <name>GTP</name>
        <dbReference type="ChEBI" id="CHEBI:37565"/>
    </ligand>
</feature>
<keyword id="KW-0963">Cytoplasm</keyword>
<keyword id="KW-0251">Elongation factor</keyword>
<keyword id="KW-0342">GTP-binding</keyword>
<keyword id="KW-0547">Nucleotide-binding</keyword>
<keyword id="KW-0648">Protein biosynthesis</keyword>
<gene>
    <name type="primary">fusA</name>
    <name type="synonym">fus</name>
</gene>
<sequence>MAREVPIEKLRNIGIVAHIDAGKTTTTERIPTTGKDIQIGEVTEGAATMDWMPQEKERGITITAATTACYWTRNGERYQINIIDTPGHVDFSVEVVRSMKVLDGIVFIFSAVEGVQPQSEANWRWADRFKVPRIAFINKMDRLGADFYRVFKEIEEKLTIKPVAIQIPLGAEDQFEGVIDLMEMKAIRWLEVTLGAKYEVIDIPPGYQEKAQEWREKMIETIVETDDELMEKYLEAQEITLEELRKALRKATINRQLVPVLCGSAFKNKGVQPLLDAVIVTYPLPIDLPPVKGTNPNTGEEEERRPLDEEPFCAYAFKVMADPYAGQLTYIRVFSGTLKAGSYVYNATRDEKQRAGRLLLMHANSREEIQQVSAGEICAVVGLDAATGDTLCDEKHPIILEKLEFPDPVISMAIEPKTKKDQEKLSQVLNLSSLKEDPTFRATTDPETGQILIHGMGELHLEIMVDRMRREYGIEVNVGKPQVAYKETIRKKAIGEGKFIKQTGGRGQYGHAIIEIEPLPRGKGFEFIDDIHGGVIPKEFIPSVEKGVKEAMQNGILAGYPVVDVRVRLFDGSYHEVDSSDIAFQVAGSLAFKDAAKKADPVLLEPIMEVEVETPEDYVGDVIGDLNSRRGTIMGMENKGNITVVKAHVPLAEMFGYATTLRSLTQGRGTFIMRFSHYDEVPQHIAEKIIGERMAGKSS</sequence>
<reference key="1">
    <citation type="journal article" date="1995" name="J. Mol. Evol.">
        <title>Arrangement and nucleotide sequence of the gene (fus) encoding elongation factor G (EF-G) from the hyperthermophilic bacterium Aquifex pyrophilus: phylogenetic depth of hyperthermophilic bacteria inferred from analysis of the EF-G/fus sequences.</title>
        <authorList>
            <person name="Bocchetta M."/>
            <person name="Ceccarelli E."/>
            <person name="Creti R."/>
            <person name="Sanangelantoni A.M."/>
            <person name="Tiboni O."/>
            <person name="Cammarano P."/>
        </authorList>
    </citation>
    <scope>NUCLEOTIDE SEQUENCE [GENOMIC DNA]</scope>
    <source>
        <strain>DSM 6858 / JCM 9492 / Kol5A</strain>
    </source>
</reference>
<comment type="function">
    <text evidence="1">Catalyzes the GTP-dependent ribosomal translocation step during translation elongation. During this step, the ribosome changes from the pre-translocational (PRE) to the post-translocational (POST) state as the newly formed A-site-bound peptidyl-tRNA and P-site-bound deacylated tRNA move to the P and E sites, respectively. Catalyzes the coordinated movement of the two tRNA molecules, the mRNA and conformational changes in the ribosome (By similarity).</text>
</comment>
<comment type="subcellular location">
    <subcellularLocation>
        <location evidence="1">Cytoplasm</location>
    </subcellularLocation>
</comment>
<comment type="similarity">
    <text evidence="2">Belongs to the TRAFAC class translation factor GTPase superfamily. Classic translation factor GTPase family. EF-G/EF-2 subfamily.</text>
</comment>
<comment type="sequence caution" evidence="2">
    <conflict type="frameshift">
        <sequence resource="EMBL-CDS" id="CAA52336"/>
    </conflict>
</comment>
<proteinExistence type="inferred from homology"/>
<dbReference type="EMBL" id="X74277">
    <property type="protein sequence ID" value="CAA52336.1"/>
    <property type="status" value="ALT_FRAME"/>
    <property type="molecule type" value="Genomic_DNA"/>
</dbReference>
<dbReference type="PIR" id="S38928">
    <property type="entry name" value="S38928"/>
</dbReference>
<dbReference type="SMR" id="P46211"/>
<dbReference type="GO" id="GO:0005737">
    <property type="term" value="C:cytoplasm"/>
    <property type="evidence" value="ECO:0007669"/>
    <property type="project" value="UniProtKB-SubCell"/>
</dbReference>
<dbReference type="GO" id="GO:0005525">
    <property type="term" value="F:GTP binding"/>
    <property type="evidence" value="ECO:0007669"/>
    <property type="project" value="UniProtKB-UniRule"/>
</dbReference>
<dbReference type="GO" id="GO:0003924">
    <property type="term" value="F:GTPase activity"/>
    <property type="evidence" value="ECO:0007669"/>
    <property type="project" value="InterPro"/>
</dbReference>
<dbReference type="GO" id="GO:0003746">
    <property type="term" value="F:translation elongation factor activity"/>
    <property type="evidence" value="ECO:0007669"/>
    <property type="project" value="UniProtKB-UniRule"/>
</dbReference>
<dbReference type="GO" id="GO:0032790">
    <property type="term" value="P:ribosome disassembly"/>
    <property type="evidence" value="ECO:0007669"/>
    <property type="project" value="TreeGrafter"/>
</dbReference>
<dbReference type="CDD" id="cd01886">
    <property type="entry name" value="EF-G"/>
    <property type="match status" value="1"/>
</dbReference>
<dbReference type="CDD" id="cd16262">
    <property type="entry name" value="EFG_III"/>
    <property type="match status" value="1"/>
</dbReference>
<dbReference type="CDD" id="cd01434">
    <property type="entry name" value="EFG_mtEFG1_IV"/>
    <property type="match status" value="1"/>
</dbReference>
<dbReference type="CDD" id="cd03713">
    <property type="entry name" value="EFG_mtEFG_C"/>
    <property type="match status" value="1"/>
</dbReference>
<dbReference type="CDD" id="cd04088">
    <property type="entry name" value="EFG_mtEFG_II"/>
    <property type="match status" value="1"/>
</dbReference>
<dbReference type="FunFam" id="2.40.30.10:FF:000006">
    <property type="entry name" value="Elongation factor G"/>
    <property type="match status" value="1"/>
</dbReference>
<dbReference type="FunFam" id="3.30.230.10:FF:000003">
    <property type="entry name" value="Elongation factor G"/>
    <property type="match status" value="1"/>
</dbReference>
<dbReference type="FunFam" id="3.30.70.240:FF:000001">
    <property type="entry name" value="Elongation factor G"/>
    <property type="match status" value="1"/>
</dbReference>
<dbReference type="FunFam" id="3.30.70.870:FF:000001">
    <property type="entry name" value="Elongation factor G"/>
    <property type="match status" value="1"/>
</dbReference>
<dbReference type="FunFam" id="3.40.50.300:FF:000029">
    <property type="entry name" value="Elongation factor G"/>
    <property type="match status" value="1"/>
</dbReference>
<dbReference type="Gene3D" id="3.30.230.10">
    <property type="match status" value="1"/>
</dbReference>
<dbReference type="Gene3D" id="3.30.70.240">
    <property type="match status" value="1"/>
</dbReference>
<dbReference type="Gene3D" id="3.30.70.870">
    <property type="entry name" value="Elongation Factor G (Translational Gtpase), domain 3"/>
    <property type="match status" value="1"/>
</dbReference>
<dbReference type="Gene3D" id="3.40.50.300">
    <property type="entry name" value="P-loop containing nucleotide triphosphate hydrolases"/>
    <property type="match status" value="1"/>
</dbReference>
<dbReference type="Gene3D" id="2.40.30.10">
    <property type="entry name" value="Translation factors"/>
    <property type="match status" value="1"/>
</dbReference>
<dbReference type="HAMAP" id="MF_00054_B">
    <property type="entry name" value="EF_G_EF_2_B"/>
    <property type="match status" value="1"/>
</dbReference>
<dbReference type="InterPro" id="IPR053905">
    <property type="entry name" value="EF-G-like_DII"/>
</dbReference>
<dbReference type="InterPro" id="IPR041095">
    <property type="entry name" value="EFG_II"/>
</dbReference>
<dbReference type="InterPro" id="IPR009022">
    <property type="entry name" value="EFG_III"/>
</dbReference>
<dbReference type="InterPro" id="IPR035647">
    <property type="entry name" value="EFG_III/V"/>
</dbReference>
<dbReference type="InterPro" id="IPR047872">
    <property type="entry name" value="EFG_IV"/>
</dbReference>
<dbReference type="InterPro" id="IPR035649">
    <property type="entry name" value="EFG_V"/>
</dbReference>
<dbReference type="InterPro" id="IPR000640">
    <property type="entry name" value="EFG_V-like"/>
</dbReference>
<dbReference type="InterPro" id="IPR031157">
    <property type="entry name" value="G_TR_CS"/>
</dbReference>
<dbReference type="InterPro" id="IPR027417">
    <property type="entry name" value="P-loop_NTPase"/>
</dbReference>
<dbReference type="InterPro" id="IPR020568">
    <property type="entry name" value="Ribosomal_Su5_D2-typ_SF"/>
</dbReference>
<dbReference type="InterPro" id="IPR014721">
    <property type="entry name" value="Ribsml_uS5_D2-typ_fold_subgr"/>
</dbReference>
<dbReference type="InterPro" id="IPR005225">
    <property type="entry name" value="Small_GTP-bd"/>
</dbReference>
<dbReference type="InterPro" id="IPR000795">
    <property type="entry name" value="T_Tr_GTP-bd_dom"/>
</dbReference>
<dbReference type="InterPro" id="IPR009000">
    <property type="entry name" value="Transl_B-barrel_sf"/>
</dbReference>
<dbReference type="InterPro" id="IPR004540">
    <property type="entry name" value="Transl_elong_EFG/EF2"/>
</dbReference>
<dbReference type="InterPro" id="IPR005517">
    <property type="entry name" value="Transl_elong_EFG/EF2_IV"/>
</dbReference>
<dbReference type="NCBIfam" id="TIGR00484">
    <property type="entry name" value="EF-G"/>
    <property type="match status" value="1"/>
</dbReference>
<dbReference type="NCBIfam" id="NF009379">
    <property type="entry name" value="PRK12740.1-3"/>
    <property type="match status" value="1"/>
</dbReference>
<dbReference type="NCBIfam" id="NF009381">
    <property type="entry name" value="PRK12740.1-5"/>
    <property type="match status" value="1"/>
</dbReference>
<dbReference type="NCBIfam" id="NF009891">
    <property type="entry name" value="PRK13351.1-1"/>
    <property type="match status" value="1"/>
</dbReference>
<dbReference type="NCBIfam" id="TIGR00231">
    <property type="entry name" value="small_GTP"/>
    <property type="match status" value="1"/>
</dbReference>
<dbReference type="PANTHER" id="PTHR43261:SF1">
    <property type="entry name" value="RIBOSOME-RELEASING FACTOR 2, MITOCHONDRIAL"/>
    <property type="match status" value="1"/>
</dbReference>
<dbReference type="PANTHER" id="PTHR43261">
    <property type="entry name" value="TRANSLATION ELONGATION FACTOR G-RELATED"/>
    <property type="match status" value="1"/>
</dbReference>
<dbReference type="Pfam" id="PF22042">
    <property type="entry name" value="EF-G_D2"/>
    <property type="match status" value="1"/>
</dbReference>
<dbReference type="Pfam" id="PF00679">
    <property type="entry name" value="EFG_C"/>
    <property type="match status" value="1"/>
</dbReference>
<dbReference type="Pfam" id="PF14492">
    <property type="entry name" value="EFG_III"/>
    <property type="match status" value="1"/>
</dbReference>
<dbReference type="Pfam" id="PF03764">
    <property type="entry name" value="EFG_IV"/>
    <property type="match status" value="1"/>
</dbReference>
<dbReference type="Pfam" id="PF00009">
    <property type="entry name" value="GTP_EFTU"/>
    <property type="match status" value="1"/>
</dbReference>
<dbReference type="PRINTS" id="PR00315">
    <property type="entry name" value="ELONGATNFCT"/>
</dbReference>
<dbReference type="SMART" id="SM00838">
    <property type="entry name" value="EFG_C"/>
    <property type="match status" value="1"/>
</dbReference>
<dbReference type="SMART" id="SM00889">
    <property type="entry name" value="EFG_IV"/>
    <property type="match status" value="1"/>
</dbReference>
<dbReference type="SUPFAM" id="SSF54980">
    <property type="entry name" value="EF-G C-terminal domain-like"/>
    <property type="match status" value="2"/>
</dbReference>
<dbReference type="SUPFAM" id="SSF52540">
    <property type="entry name" value="P-loop containing nucleoside triphosphate hydrolases"/>
    <property type="match status" value="1"/>
</dbReference>
<dbReference type="SUPFAM" id="SSF54211">
    <property type="entry name" value="Ribosomal protein S5 domain 2-like"/>
    <property type="match status" value="1"/>
</dbReference>
<dbReference type="SUPFAM" id="SSF50447">
    <property type="entry name" value="Translation proteins"/>
    <property type="match status" value="1"/>
</dbReference>
<dbReference type="PROSITE" id="PS00301">
    <property type="entry name" value="G_TR_1"/>
    <property type="match status" value="1"/>
</dbReference>
<dbReference type="PROSITE" id="PS51722">
    <property type="entry name" value="G_TR_2"/>
    <property type="match status" value="1"/>
</dbReference>